<gene>
    <name type="primary">gua1</name>
    <name type="ORF">AO090026000141</name>
</gene>
<name>GUAA_ASPOR</name>
<keyword id="KW-0067">ATP-binding</keyword>
<keyword id="KW-0963">Cytoplasm</keyword>
<keyword id="KW-0315">Glutamine amidotransferase</keyword>
<keyword id="KW-0332">GMP biosynthesis</keyword>
<keyword id="KW-0436">Ligase</keyword>
<keyword id="KW-0460">Magnesium</keyword>
<keyword id="KW-0547">Nucleotide-binding</keyword>
<keyword id="KW-0658">Purine biosynthesis</keyword>
<keyword id="KW-1185">Reference proteome</keyword>
<reference key="1">
    <citation type="journal article" date="2005" name="Nature">
        <title>Genome sequencing and analysis of Aspergillus oryzae.</title>
        <authorList>
            <person name="Machida M."/>
            <person name="Asai K."/>
            <person name="Sano M."/>
            <person name="Tanaka T."/>
            <person name="Kumagai T."/>
            <person name="Terai G."/>
            <person name="Kusumoto K."/>
            <person name="Arima T."/>
            <person name="Akita O."/>
            <person name="Kashiwagi Y."/>
            <person name="Abe K."/>
            <person name="Gomi K."/>
            <person name="Horiuchi H."/>
            <person name="Kitamoto K."/>
            <person name="Kobayashi T."/>
            <person name="Takeuchi M."/>
            <person name="Denning D.W."/>
            <person name="Galagan J.E."/>
            <person name="Nierman W.C."/>
            <person name="Yu J."/>
            <person name="Archer D.B."/>
            <person name="Bennett J.W."/>
            <person name="Bhatnagar D."/>
            <person name="Cleveland T.E."/>
            <person name="Fedorova N.D."/>
            <person name="Gotoh O."/>
            <person name="Horikawa H."/>
            <person name="Hosoyama A."/>
            <person name="Ichinomiya M."/>
            <person name="Igarashi R."/>
            <person name="Iwashita K."/>
            <person name="Juvvadi P.R."/>
            <person name="Kato M."/>
            <person name="Kato Y."/>
            <person name="Kin T."/>
            <person name="Kokubun A."/>
            <person name="Maeda H."/>
            <person name="Maeyama N."/>
            <person name="Maruyama J."/>
            <person name="Nagasaki H."/>
            <person name="Nakajima T."/>
            <person name="Oda K."/>
            <person name="Okada K."/>
            <person name="Paulsen I."/>
            <person name="Sakamoto K."/>
            <person name="Sawano T."/>
            <person name="Takahashi M."/>
            <person name="Takase K."/>
            <person name="Terabayashi Y."/>
            <person name="Wortman J.R."/>
            <person name="Yamada O."/>
            <person name="Yamagata Y."/>
            <person name="Anazawa H."/>
            <person name="Hata Y."/>
            <person name="Koide Y."/>
            <person name="Komori T."/>
            <person name="Koyama Y."/>
            <person name="Minetoki T."/>
            <person name="Suharnan S."/>
            <person name="Tanaka A."/>
            <person name="Isono K."/>
            <person name="Kuhara S."/>
            <person name="Ogasawara N."/>
            <person name="Kikuchi H."/>
        </authorList>
    </citation>
    <scope>NUCLEOTIDE SEQUENCE [LARGE SCALE GENOMIC DNA]</scope>
    <source>
        <strain>ATCC 42149 / RIB 40</strain>
    </source>
</reference>
<sequence>MAETPELEPHNAFDTILTLDFGSQYTHLITRRLRELNVYSEMLPCTQKLADLKFKPAGVILSGGPYSVYEEGAPHVDPAYFDLGVPILGICYGLQEIAYRLDSTNVIAGTSREYGLAQLKAKKVGGHVDHLFDGLEDEFNVWMSHGDKLGKLPEGFHTIATTPNSEYAGIAHETKPIYGLQLHPEVTHTQNGTKLLKNFAVNICGCKQNWTMARFVDQEIARIRKLVGPTGQVLGAVSGGVDSTVAAKLMKEAIGDRFHAVLVDTGFMRLNECEQVKQTLAEHLGINLIVADASQVFMEGLKGISDPEQKRKFIGNKFIDVFEEEAKKIEDAAAHSETAGKIGFFLQGTLYPDVIESISFKGPSATIKTHHNVGGLPKRMTEGQGLKLIEPLRELFKDEVRDLGRQLGIAHEMVMRHPFPGPGIAIRILGEITPERVEMARKADHIFISMIREAGLYDKIGQAFAALDPSRAVGVMGDKRVYENIVLLRAVETTDFMTAIAYPFEHEFLTRVSTRIVNEVSGVCRVAYDYTSKPPGTIELE</sequence>
<feature type="chain" id="PRO_0000286145" description="GMP synthase [glutamine-hydrolyzing]">
    <location>
        <begin position="1"/>
        <end position="541"/>
    </location>
</feature>
<feature type="domain" description="Glutamine amidotransferase type-1" evidence="5">
    <location>
        <begin position="15"/>
        <end position="209"/>
    </location>
</feature>
<feature type="domain" description="GMPS ATP-PPase" evidence="6">
    <location>
        <begin position="210"/>
        <end position="416"/>
    </location>
</feature>
<feature type="active site" description="Nucleophile" evidence="5">
    <location>
        <position position="91"/>
    </location>
</feature>
<feature type="active site" evidence="5">
    <location>
        <position position="183"/>
    </location>
</feature>
<feature type="active site" evidence="5">
    <location>
        <position position="185"/>
    </location>
</feature>
<feature type="binding site" evidence="6">
    <location>
        <begin position="238"/>
        <end position="244"/>
    </location>
    <ligand>
        <name>ATP</name>
        <dbReference type="ChEBI" id="CHEBI:30616"/>
    </ligand>
</feature>
<feature type="binding site" evidence="2">
    <location>
        <position position="311"/>
    </location>
    <ligand>
        <name>XMP</name>
        <dbReference type="ChEBI" id="CHEBI:57464"/>
    </ligand>
</feature>
<feature type="binding site" evidence="2">
    <location>
        <position position="478"/>
    </location>
    <ligand>
        <name>XMP</name>
        <dbReference type="ChEBI" id="CHEBI:57464"/>
    </ligand>
</feature>
<feature type="binding site" evidence="2">
    <location>
        <position position="533"/>
    </location>
    <ligand>
        <name>XMP</name>
        <dbReference type="ChEBI" id="CHEBI:57464"/>
    </ligand>
</feature>
<feature type="binding site" evidence="2">
    <location>
        <position position="539"/>
    </location>
    <ligand>
        <name>XMP</name>
        <dbReference type="ChEBI" id="CHEBI:57464"/>
    </ligand>
</feature>
<accession>Q2UFN0</accession>
<dbReference type="EC" id="6.3.5.2" evidence="1"/>
<dbReference type="EMBL" id="BA000051">
    <property type="protein sequence ID" value="BAE59635.1"/>
    <property type="molecule type" value="Genomic_DNA"/>
</dbReference>
<dbReference type="RefSeq" id="XP_001821637.1">
    <property type="nucleotide sequence ID" value="XM_001821585.2"/>
</dbReference>
<dbReference type="SMR" id="Q2UFN0"/>
<dbReference type="STRING" id="510516.Q2UFN0"/>
<dbReference type="MEROPS" id="C26.957"/>
<dbReference type="EnsemblFungi" id="BAE59635">
    <property type="protein sequence ID" value="BAE59635"/>
    <property type="gene ID" value="AO090026000141"/>
</dbReference>
<dbReference type="GeneID" id="5993665"/>
<dbReference type="KEGG" id="aor:AO090026000141"/>
<dbReference type="VEuPathDB" id="FungiDB:AO090026000141"/>
<dbReference type="HOGENOM" id="CLU_014340_0_5_1"/>
<dbReference type="OMA" id="IWQSFAV"/>
<dbReference type="OrthoDB" id="13889at5052"/>
<dbReference type="UniPathway" id="UPA00189">
    <property type="reaction ID" value="UER00296"/>
</dbReference>
<dbReference type="Proteomes" id="UP000006564">
    <property type="component" value="Chromosome 3"/>
</dbReference>
<dbReference type="GO" id="GO:0005829">
    <property type="term" value="C:cytosol"/>
    <property type="evidence" value="ECO:0007669"/>
    <property type="project" value="UniProtKB-SubCell"/>
</dbReference>
<dbReference type="GO" id="GO:0005524">
    <property type="term" value="F:ATP binding"/>
    <property type="evidence" value="ECO:0007669"/>
    <property type="project" value="UniProtKB-KW"/>
</dbReference>
<dbReference type="GO" id="GO:0003922">
    <property type="term" value="F:GMP synthase (glutamine-hydrolyzing) activity"/>
    <property type="evidence" value="ECO:0000250"/>
    <property type="project" value="UniProtKB"/>
</dbReference>
<dbReference type="GO" id="GO:0003921">
    <property type="term" value="F:GMP synthase activity"/>
    <property type="evidence" value="ECO:0007669"/>
    <property type="project" value="InterPro"/>
</dbReference>
<dbReference type="GO" id="GO:0006177">
    <property type="term" value="P:GMP biosynthetic process"/>
    <property type="evidence" value="ECO:0000250"/>
    <property type="project" value="UniProtKB"/>
</dbReference>
<dbReference type="CDD" id="cd01742">
    <property type="entry name" value="GATase1_GMP_Synthase"/>
    <property type="match status" value="1"/>
</dbReference>
<dbReference type="CDD" id="cd01997">
    <property type="entry name" value="GMP_synthase_C"/>
    <property type="match status" value="1"/>
</dbReference>
<dbReference type="FunFam" id="3.30.300.10:FF:000002">
    <property type="entry name" value="GMP synthase [glutamine-hydrolyzing]"/>
    <property type="match status" value="1"/>
</dbReference>
<dbReference type="FunFam" id="3.40.50.620:FF:000001">
    <property type="entry name" value="GMP synthase [glutamine-hydrolyzing]"/>
    <property type="match status" value="1"/>
</dbReference>
<dbReference type="FunFam" id="3.40.50.880:FF:000001">
    <property type="entry name" value="GMP synthase [glutamine-hydrolyzing]"/>
    <property type="match status" value="1"/>
</dbReference>
<dbReference type="Gene3D" id="3.30.300.10">
    <property type="match status" value="1"/>
</dbReference>
<dbReference type="Gene3D" id="3.40.50.880">
    <property type="match status" value="1"/>
</dbReference>
<dbReference type="Gene3D" id="3.40.50.620">
    <property type="entry name" value="HUPs"/>
    <property type="match status" value="1"/>
</dbReference>
<dbReference type="HAMAP" id="MF_00344">
    <property type="entry name" value="GMP_synthase"/>
    <property type="match status" value="1"/>
</dbReference>
<dbReference type="InterPro" id="IPR029062">
    <property type="entry name" value="Class_I_gatase-like"/>
</dbReference>
<dbReference type="InterPro" id="IPR017926">
    <property type="entry name" value="GATASE"/>
</dbReference>
<dbReference type="InterPro" id="IPR001674">
    <property type="entry name" value="GMP_synth_C"/>
</dbReference>
<dbReference type="InterPro" id="IPR004739">
    <property type="entry name" value="GMP_synth_GATase"/>
</dbReference>
<dbReference type="InterPro" id="IPR022955">
    <property type="entry name" value="GMP_synthase"/>
</dbReference>
<dbReference type="InterPro" id="IPR025777">
    <property type="entry name" value="GMPS_ATP_PPase_dom"/>
</dbReference>
<dbReference type="InterPro" id="IPR022310">
    <property type="entry name" value="NAD/GMP_synthase"/>
</dbReference>
<dbReference type="InterPro" id="IPR014729">
    <property type="entry name" value="Rossmann-like_a/b/a_fold"/>
</dbReference>
<dbReference type="NCBIfam" id="TIGR00884">
    <property type="entry name" value="guaA_Cterm"/>
    <property type="match status" value="1"/>
</dbReference>
<dbReference type="NCBIfam" id="TIGR00888">
    <property type="entry name" value="guaA_Nterm"/>
    <property type="match status" value="1"/>
</dbReference>
<dbReference type="NCBIfam" id="NF000848">
    <property type="entry name" value="PRK00074.1"/>
    <property type="match status" value="1"/>
</dbReference>
<dbReference type="PANTHER" id="PTHR11922:SF2">
    <property type="entry name" value="GMP SYNTHASE [GLUTAMINE-HYDROLYZING]"/>
    <property type="match status" value="1"/>
</dbReference>
<dbReference type="PANTHER" id="PTHR11922">
    <property type="entry name" value="GMP SYNTHASE-RELATED"/>
    <property type="match status" value="1"/>
</dbReference>
<dbReference type="Pfam" id="PF00117">
    <property type="entry name" value="GATase"/>
    <property type="match status" value="1"/>
</dbReference>
<dbReference type="Pfam" id="PF00958">
    <property type="entry name" value="GMP_synt_C"/>
    <property type="match status" value="1"/>
</dbReference>
<dbReference type="Pfam" id="PF02540">
    <property type="entry name" value="NAD_synthase"/>
    <property type="match status" value="1"/>
</dbReference>
<dbReference type="PRINTS" id="PR00097">
    <property type="entry name" value="ANTSNTHASEII"/>
</dbReference>
<dbReference type="PRINTS" id="PR00096">
    <property type="entry name" value="GATASE"/>
</dbReference>
<dbReference type="SUPFAM" id="SSF52402">
    <property type="entry name" value="Adenine nucleotide alpha hydrolases-like"/>
    <property type="match status" value="1"/>
</dbReference>
<dbReference type="SUPFAM" id="SSF52317">
    <property type="entry name" value="Class I glutamine amidotransferase-like"/>
    <property type="match status" value="1"/>
</dbReference>
<dbReference type="SUPFAM" id="SSF54810">
    <property type="entry name" value="GMP synthetase C-terminal dimerisation domain"/>
    <property type="match status" value="1"/>
</dbReference>
<dbReference type="PROSITE" id="PS51273">
    <property type="entry name" value="GATASE_TYPE_1"/>
    <property type="match status" value="1"/>
</dbReference>
<dbReference type="PROSITE" id="PS51553">
    <property type="entry name" value="GMPS_ATP_PPASE"/>
    <property type="match status" value="1"/>
</dbReference>
<proteinExistence type="inferred from homology"/>
<evidence type="ECO:0000250" key="1">
    <source>
        <dbReference type="UniProtKB" id="P38625"/>
    </source>
</evidence>
<evidence type="ECO:0000250" key="2">
    <source>
        <dbReference type="UniProtKB" id="P49915"/>
    </source>
</evidence>
<evidence type="ECO:0000250" key="3">
    <source>
        <dbReference type="UniProtKB" id="Q4WFT3"/>
    </source>
</evidence>
<evidence type="ECO:0000250" key="4">
    <source>
        <dbReference type="UniProtKB" id="Q9P772"/>
    </source>
</evidence>
<evidence type="ECO:0000255" key="5">
    <source>
        <dbReference type="PROSITE-ProRule" id="PRU00605"/>
    </source>
</evidence>
<evidence type="ECO:0000255" key="6">
    <source>
        <dbReference type="PROSITE-ProRule" id="PRU00886"/>
    </source>
</evidence>
<protein>
    <recommendedName>
        <fullName>GMP synthase [glutamine-hydrolyzing]</fullName>
        <ecNumber evidence="1">6.3.5.2</ecNumber>
    </recommendedName>
    <alternativeName>
        <fullName>GMP synthetase</fullName>
    </alternativeName>
    <alternativeName>
        <fullName>Glutamine amidotransferase</fullName>
    </alternativeName>
</protein>
<organism>
    <name type="scientific">Aspergillus oryzae (strain ATCC 42149 / RIB 40)</name>
    <name type="common">Yellow koji mold</name>
    <dbReference type="NCBI Taxonomy" id="510516"/>
    <lineage>
        <taxon>Eukaryota</taxon>
        <taxon>Fungi</taxon>
        <taxon>Dikarya</taxon>
        <taxon>Ascomycota</taxon>
        <taxon>Pezizomycotina</taxon>
        <taxon>Eurotiomycetes</taxon>
        <taxon>Eurotiomycetidae</taxon>
        <taxon>Eurotiales</taxon>
        <taxon>Aspergillaceae</taxon>
        <taxon>Aspergillus</taxon>
        <taxon>Aspergillus subgen. Circumdati</taxon>
    </lineage>
</organism>
<comment type="function">
    <text evidence="1">Catalyzes the conversion of xanthine monophosphate (XMP) to GMP in the presence of glutamine and ATP through an adenyl-XMP intermediate.</text>
</comment>
<comment type="catalytic activity">
    <reaction evidence="1">
        <text>XMP + L-glutamine + ATP + H2O = GMP + L-glutamate + AMP + diphosphate + 2 H(+)</text>
        <dbReference type="Rhea" id="RHEA:11680"/>
        <dbReference type="ChEBI" id="CHEBI:15377"/>
        <dbReference type="ChEBI" id="CHEBI:15378"/>
        <dbReference type="ChEBI" id="CHEBI:29985"/>
        <dbReference type="ChEBI" id="CHEBI:30616"/>
        <dbReference type="ChEBI" id="CHEBI:33019"/>
        <dbReference type="ChEBI" id="CHEBI:57464"/>
        <dbReference type="ChEBI" id="CHEBI:58115"/>
        <dbReference type="ChEBI" id="CHEBI:58359"/>
        <dbReference type="ChEBI" id="CHEBI:456215"/>
        <dbReference type="EC" id="6.3.5.2"/>
    </reaction>
</comment>
<comment type="cofactor">
    <cofactor evidence="3">
        <name>Mg(2+)</name>
        <dbReference type="ChEBI" id="CHEBI:18420"/>
    </cofactor>
</comment>
<comment type="pathway">
    <text evidence="1">Purine metabolism; GMP biosynthesis; GMP from XMP (L-Gln route): step 1/1.</text>
</comment>
<comment type="subunit">
    <text evidence="3">Homodimer.</text>
</comment>
<comment type="subcellular location">
    <subcellularLocation>
        <location evidence="4">Cytoplasm</location>
        <location evidence="4">Cytosol</location>
    </subcellularLocation>
</comment>